<gene>
    <name evidence="1" type="primary">proB</name>
    <name type="ordered locus">NGR_c31710</name>
</gene>
<proteinExistence type="inferred from homology"/>
<organism>
    <name type="scientific">Sinorhizobium fredii (strain NBRC 101917 / NGR234)</name>
    <dbReference type="NCBI Taxonomy" id="394"/>
    <lineage>
        <taxon>Bacteria</taxon>
        <taxon>Pseudomonadati</taxon>
        <taxon>Pseudomonadota</taxon>
        <taxon>Alphaproteobacteria</taxon>
        <taxon>Hyphomicrobiales</taxon>
        <taxon>Rhizobiaceae</taxon>
        <taxon>Sinorhizobium/Ensifer group</taxon>
        <taxon>Sinorhizobium</taxon>
    </lineage>
</organism>
<evidence type="ECO:0000255" key="1">
    <source>
        <dbReference type="HAMAP-Rule" id="MF_00456"/>
    </source>
</evidence>
<evidence type="ECO:0000256" key="2">
    <source>
        <dbReference type="SAM" id="MobiDB-lite"/>
    </source>
</evidence>
<feature type="chain" id="PRO_1000193701" description="Glutamate 5-kinase">
    <location>
        <begin position="1"/>
        <end position="393"/>
    </location>
</feature>
<feature type="domain" description="PUA" evidence="1">
    <location>
        <begin position="282"/>
        <end position="359"/>
    </location>
</feature>
<feature type="region of interest" description="Disordered" evidence="2">
    <location>
        <begin position="374"/>
        <end position="393"/>
    </location>
</feature>
<feature type="compositionally biased region" description="Basic and acidic residues" evidence="2">
    <location>
        <begin position="379"/>
        <end position="393"/>
    </location>
</feature>
<feature type="binding site" evidence="1">
    <location>
        <position position="17"/>
    </location>
    <ligand>
        <name>ATP</name>
        <dbReference type="ChEBI" id="CHEBI:30616"/>
    </ligand>
</feature>
<feature type="binding site" evidence="1">
    <location>
        <position position="57"/>
    </location>
    <ligand>
        <name>substrate</name>
    </ligand>
</feature>
<feature type="binding site" evidence="1">
    <location>
        <position position="144"/>
    </location>
    <ligand>
        <name>substrate</name>
    </ligand>
</feature>
<feature type="binding site" evidence="1">
    <location>
        <position position="156"/>
    </location>
    <ligand>
        <name>substrate</name>
    </ligand>
</feature>
<feature type="binding site" evidence="1">
    <location>
        <begin position="176"/>
        <end position="177"/>
    </location>
    <ligand>
        <name>ATP</name>
        <dbReference type="ChEBI" id="CHEBI:30616"/>
    </ligand>
</feature>
<dbReference type="EC" id="2.7.2.11" evidence="1"/>
<dbReference type="EMBL" id="CP001389">
    <property type="protein sequence ID" value="ACP26905.1"/>
    <property type="molecule type" value="Genomic_DNA"/>
</dbReference>
<dbReference type="RefSeq" id="WP_012709656.1">
    <property type="nucleotide sequence ID" value="NC_012587.1"/>
</dbReference>
<dbReference type="RefSeq" id="YP_002827658.1">
    <property type="nucleotide sequence ID" value="NC_012587.1"/>
</dbReference>
<dbReference type="SMR" id="C3M9Y0"/>
<dbReference type="STRING" id="394.NGR_c31710"/>
<dbReference type="KEGG" id="rhi:NGR_c31710"/>
<dbReference type="PATRIC" id="fig|394.7.peg.6009"/>
<dbReference type="eggNOG" id="COG0263">
    <property type="taxonomic scope" value="Bacteria"/>
</dbReference>
<dbReference type="HOGENOM" id="CLU_025400_2_0_5"/>
<dbReference type="OrthoDB" id="9804434at2"/>
<dbReference type="UniPathway" id="UPA00098">
    <property type="reaction ID" value="UER00359"/>
</dbReference>
<dbReference type="Proteomes" id="UP000001054">
    <property type="component" value="Chromosome"/>
</dbReference>
<dbReference type="GO" id="GO:0005829">
    <property type="term" value="C:cytosol"/>
    <property type="evidence" value="ECO:0007669"/>
    <property type="project" value="TreeGrafter"/>
</dbReference>
<dbReference type="GO" id="GO:0005524">
    <property type="term" value="F:ATP binding"/>
    <property type="evidence" value="ECO:0007669"/>
    <property type="project" value="UniProtKB-KW"/>
</dbReference>
<dbReference type="GO" id="GO:0004349">
    <property type="term" value="F:glutamate 5-kinase activity"/>
    <property type="evidence" value="ECO:0007669"/>
    <property type="project" value="UniProtKB-UniRule"/>
</dbReference>
<dbReference type="GO" id="GO:0003723">
    <property type="term" value="F:RNA binding"/>
    <property type="evidence" value="ECO:0007669"/>
    <property type="project" value="InterPro"/>
</dbReference>
<dbReference type="GO" id="GO:0055129">
    <property type="term" value="P:L-proline biosynthetic process"/>
    <property type="evidence" value="ECO:0007669"/>
    <property type="project" value="UniProtKB-UniRule"/>
</dbReference>
<dbReference type="CDD" id="cd04242">
    <property type="entry name" value="AAK_G5K_ProB"/>
    <property type="match status" value="1"/>
</dbReference>
<dbReference type="CDD" id="cd21157">
    <property type="entry name" value="PUA_G5K"/>
    <property type="match status" value="1"/>
</dbReference>
<dbReference type="FunFam" id="2.30.130.10:FF:000007">
    <property type="entry name" value="Glutamate 5-kinase"/>
    <property type="match status" value="1"/>
</dbReference>
<dbReference type="FunFam" id="3.40.1160.10:FF:000018">
    <property type="entry name" value="Glutamate 5-kinase"/>
    <property type="match status" value="1"/>
</dbReference>
<dbReference type="Gene3D" id="3.40.1160.10">
    <property type="entry name" value="Acetylglutamate kinase-like"/>
    <property type="match status" value="1"/>
</dbReference>
<dbReference type="Gene3D" id="2.30.130.10">
    <property type="entry name" value="PUA domain"/>
    <property type="match status" value="1"/>
</dbReference>
<dbReference type="HAMAP" id="MF_00456">
    <property type="entry name" value="ProB"/>
    <property type="match status" value="1"/>
</dbReference>
<dbReference type="InterPro" id="IPR036393">
    <property type="entry name" value="AceGlu_kinase-like_sf"/>
</dbReference>
<dbReference type="InterPro" id="IPR001048">
    <property type="entry name" value="Asp/Glu/Uridylate_kinase"/>
</dbReference>
<dbReference type="InterPro" id="IPR041739">
    <property type="entry name" value="G5K_ProB"/>
</dbReference>
<dbReference type="InterPro" id="IPR001057">
    <property type="entry name" value="Glu/AcGlu_kinase"/>
</dbReference>
<dbReference type="InterPro" id="IPR011529">
    <property type="entry name" value="Glu_5kinase"/>
</dbReference>
<dbReference type="InterPro" id="IPR005715">
    <property type="entry name" value="Glu_5kinase/COase_Synthase"/>
</dbReference>
<dbReference type="InterPro" id="IPR019797">
    <property type="entry name" value="Glutamate_5-kinase_CS"/>
</dbReference>
<dbReference type="InterPro" id="IPR002478">
    <property type="entry name" value="PUA"/>
</dbReference>
<dbReference type="InterPro" id="IPR015947">
    <property type="entry name" value="PUA-like_sf"/>
</dbReference>
<dbReference type="InterPro" id="IPR036974">
    <property type="entry name" value="PUA_sf"/>
</dbReference>
<dbReference type="NCBIfam" id="TIGR01027">
    <property type="entry name" value="proB"/>
    <property type="match status" value="1"/>
</dbReference>
<dbReference type="PANTHER" id="PTHR43654">
    <property type="entry name" value="GLUTAMATE 5-KINASE"/>
    <property type="match status" value="1"/>
</dbReference>
<dbReference type="PANTHER" id="PTHR43654:SF1">
    <property type="entry name" value="ISOPENTENYL PHOSPHATE KINASE"/>
    <property type="match status" value="1"/>
</dbReference>
<dbReference type="Pfam" id="PF00696">
    <property type="entry name" value="AA_kinase"/>
    <property type="match status" value="1"/>
</dbReference>
<dbReference type="Pfam" id="PF01472">
    <property type="entry name" value="PUA"/>
    <property type="match status" value="1"/>
</dbReference>
<dbReference type="PIRSF" id="PIRSF000729">
    <property type="entry name" value="GK"/>
    <property type="match status" value="1"/>
</dbReference>
<dbReference type="PRINTS" id="PR00474">
    <property type="entry name" value="GLU5KINASE"/>
</dbReference>
<dbReference type="SMART" id="SM00359">
    <property type="entry name" value="PUA"/>
    <property type="match status" value="1"/>
</dbReference>
<dbReference type="SUPFAM" id="SSF53633">
    <property type="entry name" value="Carbamate kinase-like"/>
    <property type="match status" value="1"/>
</dbReference>
<dbReference type="SUPFAM" id="SSF88697">
    <property type="entry name" value="PUA domain-like"/>
    <property type="match status" value="1"/>
</dbReference>
<dbReference type="PROSITE" id="PS00902">
    <property type="entry name" value="GLUTAMATE_5_KINASE"/>
    <property type="match status" value="1"/>
</dbReference>
<dbReference type="PROSITE" id="PS50890">
    <property type="entry name" value="PUA"/>
    <property type="match status" value="1"/>
</dbReference>
<protein>
    <recommendedName>
        <fullName evidence="1">Glutamate 5-kinase</fullName>
        <ecNumber evidence="1">2.7.2.11</ecNumber>
    </recommendedName>
    <alternativeName>
        <fullName evidence="1">Gamma-glutamyl kinase</fullName>
        <shortName evidence="1">GK</shortName>
    </alternativeName>
</protein>
<sequence>MAATVRPLEKYRRIVIKIGSALLVDRKSGLKKSWLDAMCVDIAALKAKGVEVLVVSSGAIALGRTVLNLPAGALKLEESQAAAAVGQIALARAWSESLSTDQIIAGQILLTLGDTEERRRYLNARATINQLLKLGSVPIINENDTVATTEIRYGDNDRLAARVATMVGADLLVLLSDIDGLYTAPPHLDPQARFLETIAEITPEIEAMAGGAASELSRGGMRTKIDAGKIATTAGCAMIIASGKPEHPLKAIEAGARSSWFAPSGSPVTARKTWIAGQLLPAGSIAIDAGAETALRSGKSLLPAGVRQVTGTFSRGDTIAILNASGREIARGLAGYDADDARQIAGKKSAEIAAILGYAGRTAMVHRDDMVMTAPSGARSEEGGNEKKGKLHA</sequence>
<comment type="function">
    <text evidence="1">Catalyzes the transfer of a phosphate group to glutamate to form L-glutamate 5-phosphate.</text>
</comment>
<comment type="catalytic activity">
    <reaction evidence="1">
        <text>L-glutamate + ATP = L-glutamyl 5-phosphate + ADP</text>
        <dbReference type="Rhea" id="RHEA:14877"/>
        <dbReference type="ChEBI" id="CHEBI:29985"/>
        <dbReference type="ChEBI" id="CHEBI:30616"/>
        <dbReference type="ChEBI" id="CHEBI:58274"/>
        <dbReference type="ChEBI" id="CHEBI:456216"/>
        <dbReference type="EC" id="2.7.2.11"/>
    </reaction>
</comment>
<comment type="pathway">
    <text evidence="1">Amino-acid biosynthesis; L-proline biosynthesis; L-glutamate 5-semialdehyde from L-glutamate: step 1/2.</text>
</comment>
<comment type="subcellular location">
    <subcellularLocation>
        <location evidence="1">Cytoplasm</location>
    </subcellularLocation>
</comment>
<comment type="similarity">
    <text evidence="1">Belongs to the glutamate 5-kinase family.</text>
</comment>
<keyword id="KW-0028">Amino-acid biosynthesis</keyword>
<keyword id="KW-0067">ATP-binding</keyword>
<keyword id="KW-0963">Cytoplasm</keyword>
<keyword id="KW-0418">Kinase</keyword>
<keyword id="KW-0547">Nucleotide-binding</keyword>
<keyword id="KW-0641">Proline biosynthesis</keyword>
<keyword id="KW-1185">Reference proteome</keyword>
<keyword id="KW-0808">Transferase</keyword>
<reference key="1">
    <citation type="journal article" date="2009" name="Appl. Environ. Microbiol.">
        <title>Rhizobium sp. strain NGR234 possesses a remarkable number of secretion systems.</title>
        <authorList>
            <person name="Schmeisser C."/>
            <person name="Liesegang H."/>
            <person name="Krysciak D."/>
            <person name="Bakkou N."/>
            <person name="Le Quere A."/>
            <person name="Wollherr A."/>
            <person name="Heinemeyer I."/>
            <person name="Morgenstern B."/>
            <person name="Pommerening-Roeser A."/>
            <person name="Flores M."/>
            <person name="Palacios R."/>
            <person name="Brenner S."/>
            <person name="Gottschalk G."/>
            <person name="Schmitz R.A."/>
            <person name="Broughton W.J."/>
            <person name="Perret X."/>
            <person name="Strittmatter A.W."/>
            <person name="Streit W.R."/>
        </authorList>
    </citation>
    <scope>NUCLEOTIDE SEQUENCE [LARGE SCALE GENOMIC DNA]</scope>
    <source>
        <strain>NBRC 101917 / NGR234</strain>
    </source>
</reference>
<name>PROB_SINFN</name>
<accession>C3M9Y0</accession>